<organism>
    <name type="scientific">Rickettsia prowazekii (strain Madrid E)</name>
    <dbReference type="NCBI Taxonomy" id="272947"/>
    <lineage>
        <taxon>Bacteria</taxon>
        <taxon>Pseudomonadati</taxon>
        <taxon>Pseudomonadota</taxon>
        <taxon>Alphaproteobacteria</taxon>
        <taxon>Rickettsiales</taxon>
        <taxon>Rickettsiaceae</taxon>
        <taxon>Rickettsieae</taxon>
        <taxon>Rickettsia</taxon>
        <taxon>typhus group</taxon>
    </lineage>
</organism>
<comment type="function">
    <text evidence="1">Involved in mRNA degradation. Catalyzes the phosphorolysis of single-stranded polyribonucleotides processively in the 3'- to 5'-direction.</text>
</comment>
<comment type="catalytic activity">
    <reaction evidence="1">
        <text>RNA(n+1) + phosphate = RNA(n) + a ribonucleoside 5'-diphosphate</text>
        <dbReference type="Rhea" id="RHEA:22096"/>
        <dbReference type="Rhea" id="RHEA-COMP:14527"/>
        <dbReference type="Rhea" id="RHEA-COMP:17342"/>
        <dbReference type="ChEBI" id="CHEBI:43474"/>
        <dbReference type="ChEBI" id="CHEBI:57930"/>
        <dbReference type="ChEBI" id="CHEBI:140395"/>
        <dbReference type="EC" id="2.7.7.8"/>
    </reaction>
</comment>
<comment type="cofactor">
    <cofactor evidence="1">
        <name>Mg(2+)</name>
        <dbReference type="ChEBI" id="CHEBI:18420"/>
    </cofactor>
</comment>
<comment type="subcellular location">
    <subcellularLocation>
        <location evidence="1">Cytoplasm</location>
    </subcellularLocation>
</comment>
<comment type="similarity">
    <text evidence="1">Belongs to the polyribonucleotide nucleotidyltransferase family.</text>
</comment>
<gene>
    <name evidence="1" type="primary">pnp</name>
    <name type="ordered locus">RP504</name>
</gene>
<evidence type="ECO:0000255" key="1">
    <source>
        <dbReference type="HAMAP-Rule" id="MF_01595"/>
    </source>
</evidence>
<evidence type="ECO:0000256" key="2">
    <source>
        <dbReference type="SAM" id="MobiDB-lite"/>
    </source>
</evidence>
<accession>Q9ZD43</accession>
<dbReference type="EC" id="2.7.7.8" evidence="1"/>
<dbReference type="EMBL" id="AJ235272">
    <property type="protein sequence ID" value="CAA14956.1"/>
    <property type="molecule type" value="Genomic_DNA"/>
</dbReference>
<dbReference type="PIR" id="B71654">
    <property type="entry name" value="B71654"/>
</dbReference>
<dbReference type="RefSeq" id="NP_220880.1">
    <property type="nucleotide sequence ID" value="NC_000963.1"/>
</dbReference>
<dbReference type="RefSeq" id="WP_010886309.1">
    <property type="nucleotide sequence ID" value="NC_000963.1"/>
</dbReference>
<dbReference type="SMR" id="Q9ZD43"/>
<dbReference type="STRING" id="272947.gene:17555584"/>
<dbReference type="EnsemblBacteria" id="CAA14956">
    <property type="protein sequence ID" value="CAA14956"/>
    <property type="gene ID" value="CAA14956"/>
</dbReference>
<dbReference type="KEGG" id="rpr:RP504"/>
<dbReference type="PATRIC" id="fig|272947.5.peg.513"/>
<dbReference type="eggNOG" id="COG1185">
    <property type="taxonomic scope" value="Bacteria"/>
</dbReference>
<dbReference type="HOGENOM" id="CLU_004217_2_2_5"/>
<dbReference type="OrthoDB" id="9804305at2"/>
<dbReference type="Proteomes" id="UP000002480">
    <property type="component" value="Chromosome"/>
</dbReference>
<dbReference type="GO" id="GO:0005829">
    <property type="term" value="C:cytosol"/>
    <property type="evidence" value="ECO:0007669"/>
    <property type="project" value="TreeGrafter"/>
</dbReference>
<dbReference type="GO" id="GO:0000175">
    <property type="term" value="F:3'-5'-RNA exonuclease activity"/>
    <property type="evidence" value="ECO:0007669"/>
    <property type="project" value="TreeGrafter"/>
</dbReference>
<dbReference type="GO" id="GO:0000287">
    <property type="term" value="F:magnesium ion binding"/>
    <property type="evidence" value="ECO:0007669"/>
    <property type="project" value="UniProtKB-UniRule"/>
</dbReference>
<dbReference type="GO" id="GO:0004654">
    <property type="term" value="F:polyribonucleotide nucleotidyltransferase activity"/>
    <property type="evidence" value="ECO:0007669"/>
    <property type="project" value="UniProtKB-UniRule"/>
</dbReference>
<dbReference type="GO" id="GO:0003723">
    <property type="term" value="F:RNA binding"/>
    <property type="evidence" value="ECO:0007669"/>
    <property type="project" value="UniProtKB-UniRule"/>
</dbReference>
<dbReference type="GO" id="GO:0006402">
    <property type="term" value="P:mRNA catabolic process"/>
    <property type="evidence" value="ECO:0007669"/>
    <property type="project" value="UniProtKB-UniRule"/>
</dbReference>
<dbReference type="GO" id="GO:0006396">
    <property type="term" value="P:RNA processing"/>
    <property type="evidence" value="ECO:0007669"/>
    <property type="project" value="InterPro"/>
</dbReference>
<dbReference type="CDD" id="cd02393">
    <property type="entry name" value="KH-I_PNPase"/>
    <property type="match status" value="1"/>
</dbReference>
<dbReference type="CDD" id="cd11363">
    <property type="entry name" value="RNase_PH_PNPase_1"/>
    <property type="match status" value="1"/>
</dbReference>
<dbReference type="CDD" id="cd11364">
    <property type="entry name" value="RNase_PH_PNPase_2"/>
    <property type="match status" value="1"/>
</dbReference>
<dbReference type="FunFam" id="3.30.1370.10:FF:000001">
    <property type="entry name" value="Polyribonucleotide nucleotidyltransferase"/>
    <property type="match status" value="1"/>
</dbReference>
<dbReference type="FunFam" id="3.30.230.70:FF:000001">
    <property type="entry name" value="Polyribonucleotide nucleotidyltransferase"/>
    <property type="match status" value="1"/>
</dbReference>
<dbReference type="FunFam" id="3.30.230.70:FF:000002">
    <property type="entry name" value="Polyribonucleotide nucleotidyltransferase"/>
    <property type="match status" value="1"/>
</dbReference>
<dbReference type="FunFam" id="2.40.50.140:FF:000189">
    <property type="entry name" value="Polyribonucleotide nucleotidyltransferase, putative"/>
    <property type="match status" value="1"/>
</dbReference>
<dbReference type="Gene3D" id="3.30.230.70">
    <property type="entry name" value="GHMP Kinase, N-terminal domain"/>
    <property type="match status" value="2"/>
</dbReference>
<dbReference type="Gene3D" id="3.30.1370.10">
    <property type="entry name" value="K Homology domain, type 1"/>
    <property type="match status" value="1"/>
</dbReference>
<dbReference type="Gene3D" id="2.40.50.140">
    <property type="entry name" value="Nucleic acid-binding proteins"/>
    <property type="match status" value="1"/>
</dbReference>
<dbReference type="HAMAP" id="MF_01595">
    <property type="entry name" value="PNPase"/>
    <property type="match status" value="1"/>
</dbReference>
<dbReference type="InterPro" id="IPR001247">
    <property type="entry name" value="ExoRNase_PH_dom1"/>
</dbReference>
<dbReference type="InterPro" id="IPR015847">
    <property type="entry name" value="ExoRNase_PH_dom2"/>
</dbReference>
<dbReference type="InterPro" id="IPR036345">
    <property type="entry name" value="ExoRNase_PH_dom2_sf"/>
</dbReference>
<dbReference type="InterPro" id="IPR004087">
    <property type="entry name" value="KH_dom"/>
</dbReference>
<dbReference type="InterPro" id="IPR004088">
    <property type="entry name" value="KH_dom_type_1"/>
</dbReference>
<dbReference type="InterPro" id="IPR036612">
    <property type="entry name" value="KH_dom_type_1_sf"/>
</dbReference>
<dbReference type="InterPro" id="IPR012340">
    <property type="entry name" value="NA-bd_OB-fold"/>
</dbReference>
<dbReference type="InterPro" id="IPR012162">
    <property type="entry name" value="PNPase"/>
</dbReference>
<dbReference type="InterPro" id="IPR027408">
    <property type="entry name" value="PNPase/RNase_PH_dom_sf"/>
</dbReference>
<dbReference type="InterPro" id="IPR015848">
    <property type="entry name" value="PNPase_PH_RNA-bd_bac/org-type"/>
</dbReference>
<dbReference type="InterPro" id="IPR036456">
    <property type="entry name" value="PNPase_PH_RNA-bd_sf"/>
</dbReference>
<dbReference type="InterPro" id="IPR020568">
    <property type="entry name" value="Ribosomal_Su5_D2-typ_SF"/>
</dbReference>
<dbReference type="InterPro" id="IPR003029">
    <property type="entry name" value="S1_domain"/>
</dbReference>
<dbReference type="NCBIfam" id="TIGR03591">
    <property type="entry name" value="polynuc_phos"/>
    <property type="match status" value="1"/>
</dbReference>
<dbReference type="NCBIfam" id="NF008805">
    <property type="entry name" value="PRK11824.1"/>
    <property type="match status" value="1"/>
</dbReference>
<dbReference type="PANTHER" id="PTHR11252">
    <property type="entry name" value="POLYRIBONUCLEOTIDE NUCLEOTIDYLTRANSFERASE"/>
    <property type="match status" value="1"/>
</dbReference>
<dbReference type="PANTHER" id="PTHR11252:SF0">
    <property type="entry name" value="POLYRIBONUCLEOTIDE NUCLEOTIDYLTRANSFERASE 1, MITOCHONDRIAL"/>
    <property type="match status" value="1"/>
</dbReference>
<dbReference type="Pfam" id="PF00013">
    <property type="entry name" value="KH_1"/>
    <property type="match status" value="1"/>
</dbReference>
<dbReference type="Pfam" id="PF03726">
    <property type="entry name" value="PNPase"/>
    <property type="match status" value="1"/>
</dbReference>
<dbReference type="Pfam" id="PF01138">
    <property type="entry name" value="RNase_PH"/>
    <property type="match status" value="2"/>
</dbReference>
<dbReference type="Pfam" id="PF03725">
    <property type="entry name" value="RNase_PH_C"/>
    <property type="match status" value="1"/>
</dbReference>
<dbReference type="Pfam" id="PF00575">
    <property type="entry name" value="S1"/>
    <property type="match status" value="1"/>
</dbReference>
<dbReference type="PIRSF" id="PIRSF005499">
    <property type="entry name" value="PNPase"/>
    <property type="match status" value="1"/>
</dbReference>
<dbReference type="SMART" id="SM00322">
    <property type="entry name" value="KH"/>
    <property type="match status" value="1"/>
</dbReference>
<dbReference type="SMART" id="SM00316">
    <property type="entry name" value="S1"/>
    <property type="match status" value="1"/>
</dbReference>
<dbReference type="SUPFAM" id="SSF54791">
    <property type="entry name" value="Eukaryotic type KH-domain (KH-domain type I)"/>
    <property type="match status" value="1"/>
</dbReference>
<dbReference type="SUPFAM" id="SSF50249">
    <property type="entry name" value="Nucleic acid-binding proteins"/>
    <property type="match status" value="1"/>
</dbReference>
<dbReference type="SUPFAM" id="SSF46915">
    <property type="entry name" value="Polynucleotide phosphorylase/guanosine pentaphosphate synthase (PNPase/GPSI), domain 3"/>
    <property type="match status" value="1"/>
</dbReference>
<dbReference type="SUPFAM" id="SSF55666">
    <property type="entry name" value="Ribonuclease PH domain 2-like"/>
    <property type="match status" value="2"/>
</dbReference>
<dbReference type="SUPFAM" id="SSF54211">
    <property type="entry name" value="Ribosomal protein S5 domain 2-like"/>
    <property type="match status" value="2"/>
</dbReference>
<dbReference type="PROSITE" id="PS50084">
    <property type="entry name" value="KH_TYPE_1"/>
    <property type="match status" value="1"/>
</dbReference>
<dbReference type="PROSITE" id="PS50126">
    <property type="entry name" value="S1"/>
    <property type="match status" value="1"/>
</dbReference>
<sequence length="745" mass="82340">MFNEITKSVMWNGQVLEISTGKIARQANAAVTVKMGNSILLCTCVVANKVKDGIGFFPLTINYREMAYSAGKIPGGFFKREGKASDREILVSRLIDRPIRPLFHQAFMHETHVTCSVLSYDPATPVDILAIIGASAALSISPAPYLEIVAASKVGLINGEFVLNPTLELLKTSQLDLVVAGTEDSVMMVESEAHLLSEDKMLEAVKFGFESFQTVIKLIKELAKEAKKPKFEMQDLYPSSLKKEIEKLFTKEVEQAFEIKSKQERSTDLALIYEKVLTHFVRDIENKKYNNYQIESALKAISADILRNKILEKNIRIDGRSTTDIRQIACEVGLLPSAHGSALFTRGETQSLVSTTFGTSLDEQIVDSLEGEYKERFMLNYIFPPYSVNEAMPMKAPSRREVGHGKLAWRAINPILPNKVQFPYSIRVVAETTESNGSSSMATVCGSSLALMHAGVPIKAPVAGIAMGLVKESNKFAVLSDIIGDEDYFGDMDFKVAGTSSGITALQMDIKISGIDFKIIQIALEQARLGRLHILEQMNKVISKPNSELSKNAPSSTTVKIDKDKIKDIIGPGGKIIKEICETSNAKIDISDDGTVSIYASDRDKIKIALDKIKAIAVEPEIGEIFNGTVMKVLDSGAFINYLGNKDGFVHISEISDARIDKVSSVLKQGDIVKVKLIGFDNKGKAKLTIKNAYKDHSSNNTKQKNNVKDDSESEQRRDTSKKRTWNEDNNTEMSEVITERKYFT</sequence>
<keyword id="KW-0963">Cytoplasm</keyword>
<keyword id="KW-0460">Magnesium</keyword>
<keyword id="KW-0479">Metal-binding</keyword>
<keyword id="KW-0548">Nucleotidyltransferase</keyword>
<keyword id="KW-1185">Reference proteome</keyword>
<keyword id="KW-0694">RNA-binding</keyword>
<keyword id="KW-0808">Transferase</keyword>
<feature type="chain" id="PRO_0000197917" description="Polyribonucleotide nucleotidyltransferase">
    <location>
        <begin position="1"/>
        <end position="745"/>
    </location>
</feature>
<feature type="domain" description="KH" evidence="1">
    <location>
        <begin position="554"/>
        <end position="613"/>
    </location>
</feature>
<feature type="domain" description="S1 motif" evidence="1">
    <location>
        <begin position="623"/>
        <end position="691"/>
    </location>
</feature>
<feature type="region of interest" description="Disordered" evidence="2">
    <location>
        <begin position="693"/>
        <end position="732"/>
    </location>
</feature>
<feature type="compositionally biased region" description="Basic and acidic residues" evidence="2">
    <location>
        <begin position="707"/>
        <end position="719"/>
    </location>
</feature>
<feature type="binding site" evidence="1">
    <location>
        <position position="487"/>
    </location>
    <ligand>
        <name>Mg(2+)</name>
        <dbReference type="ChEBI" id="CHEBI:18420"/>
    </ligand>
</feature>
<feature type="binding site" evidence="1">
    <location>
        <position position="493"/>
    </location>
    <ligand>
        <name>Mg(2+)</name>
        <dbReference type="ChEBI" id="CHEBI:18420"/>
    </ligand>
</feature>
<protein>
    <recommendedName>
        <fullName evidence="1">Polyribonucleotide nucleotidyltransferase</fullName>
        <ecNumber evidence="1">2.7.7.8</ecNumber>
    </recommendedName>
    <alternativeName>
        <fullName evidence="1">Polynucleotide phosphorylase</fullName>
        <shortName evidence="1">PNPase</shortName>
    </alternativeName>
</protein>
<proteinExistence type="inferred from homology"/>
<name>PNP_RICPR</name>
<reference key="1">
    <citation type="journal article" date="1998" name="Nature">
        <title>The genome sequence of Rickettsia prowazekii and the origin of mitochondria.</title>
        <authorList>
            <person name="Andersson S.G.E."/>
            <person name="Zomorodipour A."/>
            <person name="Andersson J.O."/>
            <person name="Sicheritz-Ponten T."/>
            <person name="Alsmark U.C.M."/>
            <person name="Podowski R.M."/>
            <person name="Naeslund A.K."/>
            <person name="Eriksson A.-S."/>
            <person name="Winkler H.H."/>
            <person name="Kurland C.G."/>
        </authorList>
    </citation>
    <scope>NUCLEOTIDE SEQUENCE [LARGE SCALE GENOMIC DNA]</scope>
    <source>
        <strain>Madrid E</strain>
    </source>
</reference>